<accession>Q67W83</accession>
<accession>A0A0P0WZT2</accession>
<name>CSPLD_ORYSJ</name>
<feature type="chain" id="PRO_0000370300" description="CASP-like protein 2C1">
    <location>
        <begin position="1"/>
        <end position="194"/>
    </location>
</feature>
<feature type="topological domain" description="Cytoplasmic" evidence="2">
    <location>
        <begin position="1"/>
        <end position="18"/>
    </location>
</feature>
<feature type="transmembrane region" description="Helical" evidence="2">
    <location>
        <begin position="19"/>
        <end position="39"/>
    </location>
</feature>
<feature type="topological domain" description="Extracellular" evidence="2">
    <location>
        <begin position="40"/>
        <end position="59"/>
    </location>
</feature>
<feature type="transmembrane region" description="Helical" evidence="2">
    <location>
        <begin position="60"/>
        <end position="80"/>
    </location>
</feature>
<feature type="topological domain" description="Cytoplasmic" evidence="2">
    <location>
        <begin position="81"/>
        <end position="109"/>
    </location>
</feature>
<feature type="transmembrane region" description="Helical" evidence="2">
    <location>
        <begin position="110"/>
        <end position="130"/>
    </location>
</feature>
<feature type="topological domain" description="Extracellular" evidence="2">
    <location>
        <begin position="131"/>
        <end position="151"/>
    </location>
</feature>
<feature type="transmembrane region" description="Helical" evidence="2">
    <location>
        <begin position="152"/>
        <end position="172"/>
    </location>
</feature>
<feature type="topological domain" description="Cytoplasmic" evidence="2">
    <location>
        <begin position="173"/>
        <end position="194"/>
    </location>
</feature>
<dbReference type="EMBL" id="AP003579">
    <property type="protein sequence ID" value="BAD37569.1"/>
    <property type="molecule type" value="Genomic_DNA"/>
</dbReference>
<dbReference type="EMBL" id="AP003712">
    <property type="protein sequence ID" value="BAD37586.1"/>
    <property type="molecule type" value="Genomic_DNA"/>
</dbReference>
<dbReference type="EMBL" id="AP008212">
    <property type="protein sequence ID" value="BAF20165.1"/>
    <property type="molecule type" value="Genomic_DNA"/>
</dbReference>
<dbReference type="EMBL" id="AP014962">
    <property type="protein sequence ID" value="BAS98941.1"/>
    <property type="molecule type" value="Genomic_DNA"/>
</dbReference>
<dbReference type="EMBL" id="AK060123">
    <property type="protein sequence ID" value="BAG87329.1"/>
    <property type="molecule type" value="mRNA"/>
</dbReference>
<dbReference type="EMBL" id="AK060127">
    <property type="protein sequence ID" value="BAG87332.1"/>
    <property type="molecule type" value="mRNA"/>
</dbReference>
<dbReference type="RefSeq" id="XP_015641672.1">
    <property type="nucleotide sequence ID" value="XM_015786186.1"/>
</dbReference>
<dbReference type="SMR" id="Q67W83"/>
<dbReference type="FunCoup" id="Q67W83">
    <property type="interactions" value="51"/>
</dbReference>
<dbReference type="PaxDb" id="39947-Q67W83"/>
<dbReference type="EnsemblPlants" id="Os06t0656300-01">
    <property type="protein sequence ID" value="Os06t0656300-01"/>
    <property type="gene ID" value="Os06g0656300"/>
</dbReference>
<dbReference type="Gramene" id="Os06t0656300-01">
    <property type="protein sequence ID" value="Os06t0656300-01"/>
    <property type="gene ID" value="Os06g0656300"/>
</dbReference>
<dbReference type="KEGG" id="dosa:Os06g0656300"/>
<dbReference type="eggNOG" id="ENOG502S20T">
    <property type="taxonomic scope" value="Eukaryota"/>
</dbReference>
<dbReference type="HOGENOM" id="CLU_066104_0_0_1"/>
<dbReference type="InParanoid" id="Q67W83"/>
<dbReference type="OMA" id="KGCAYMT"/>
<dbReference type="OrthoDB" id="689315at2759"/>
<dbReference type="Proteomes" id="UP000000763">
    <property type="component" value="Chromosome 6"/>
</dbReference>
<dbReference type="Proteomes" id="UP000059680">
    <property type="component" value="Chromosome 6"/>
</dbReference>
<dbReference type="GO" id="GO:0005886">
    <property type="term" value="C:plasma membrane"/>
    <property type="evidence" value="ECO:0007669"/>
    <property type="project" value="UniProtKB-SubCell"/>
</dbReference>
<dbReference type="InterPro" id="IPR006459">
    <property type="entry name" value="CASP/CASPL"/>
</dbReference>
<dbReference type="InterPro" id="IPR006702">
    <property type="entry name" value="CASP_dom"/>
</dbReference>
<dbReference type="NCBIfam" id="TIGR01569">
    <property type="entry name" value="A_tha_TIGR01569"/>
    <property type="match status" value="1"/>
</dbReference>
<dbReference type="PANTHER" id="PTHR33573:SF30">
    <property type="entry name" value="CASP-LIKE PROTEIN 2C1-RELATED"/>
    <property type="match status" value="1"/>
</dbReference>
<dbReference type="PANTHER" id="PTHR33573">
    <property type="entry name" value="CASP-LIKE PROTEIN 4A4"/>
    <property type="match status" value="1"/>
</dbReference>
<dbReference type="Pfam" id="PF04535">
    <property type="entry name" value="CASP_dom"/>
    <property type="match status" value="1"/>
</dbReference>
<proteinExistence type="evidence at transcript level"/>
<protein>
    <recommendedName>
        <fullName>CASP-like protein 2C1</fullName>
        <shortName>OsCASPL2C1</shortName>
    </recommendedName>
</protein>
<reference key="1">
    <citation type="journal article" date="2005" name="Nature">
        <title>The map-based sequence of the rice genome.</title>
        <authorList>
            <consortium name="International rice genome sequencing project (IRGSP)"/>
        </authorList>
    </citation>
    <scope>NUCLEOTIDE SEQUENCE [LARGE SCALE GENOMIC DNA]</scope>
    <source>
        <strain>cv. Nipponbare</strain>
    </source>
</reference>
<reference key="2">
    <citation type="journal article" date="2008" name="Nucleic Acids Res.">
        <title>The rice annotation project database (RAP-DB): 2008 update.</title>
        <authorList>
            <consortium name="The rice annotation project (RAP)"/>
        </authorList>
    </citation>
    <scope>GENOME REANNOTATION</scope>
    <source>
        <strain>cv. Nipponbare</strain>
    </source>
</reference>
<reference key="3">
    <citation type="journal article" date="2013" name="Rice">
        <title>Improvement of the Oryza sativa Nipponbare reference genome using next generation sequence and optical map data.</title>
        <authorList>
            <person name="Kawahara Y."/>
            <person name="de la Bastide M."/>
            <person name="Hamilton J.P."/>
            <person name="Kanamori H."/>
            <person name="McCombie W.R."/>
            <person name="Ouyang S."/>
            <person name="Schwartz D.C."/>
            <person name="Tanaka T."/>
            <person name="Wu J."/>
            <person name="Zhou S."/>
            <person name="Childs K.L."/>
            <person name="Davidson R.M."/>
            <person name="Lin H."/>
            <person name="Quesada-Ocampo L."/>
            <person name="Vaillancourt B."/>
            <person name="Sakai H."/>
            <person name="Lee S.S."/>
            <person name="Kim J."/>
            <person name="Numa H."/>
            <person name="Itoh T."/>
            <person name="Buell C.R."/>
            <person name="Matsumoto T."/>
        </authorList>
    </citation>
    <scope>GENOME REANNOTATION</scope>
    <source>
        <strain>cv. Nipponbare</strain>
    </source>
</reference>
<reference key="4">
    <citation type="journal article" date="2003" name="Science">
        <title>Collection, mapping, and annotation of over 28,000 cDNA clones from japonica rice.</title>
        <authorList>
            <consortium name="The rice full-length cDNA consortium"/>
        </authorList>
    </citation>
    <scope>NUCLEOTIDE SEQUENCE [LARGE SCALE MRNA]</scope>
    <source>
        <strain>cv. Nipponbare</strain>
    </source>
</reference>
<reference key="5">
    <citation type="journal article" date="2014" name="Plant Physiol.">
        <title>Functional and evolutionary analysis of the CASPARIAN STRIP MEMBRANE DOMAIN PROTEIN family.</title>
        <authorList>
            <person name="Roppolo D."/>
            <person name="Boeckmann B."/>
            <person name="Pfister A."/>
            <person name="Boutet E."/>
            <person name="Rubio M.C."/>
            <person name="Denervaud-Tendon V."/>
            <person name="Vermeer J.E."/>
            <person name="Gheyselinck J."/>
            <person name="Xenarios I."/>
            <person name="Geldner N."/>
        </authorList>
    </citation>
    <scope>GENE FAMILY</scope>
    <scope>NOMENCLATURE</scope>
</reference>
<evidence type="ECO:0000250" key="1"/>
<evidence type="ECO:0000255" key="2"/>
<evidence type="ECO:0000305" key="3"/>
<sequence>MSSYMEAAAAARAAEAKTEGLLRGACALLAAAAALLVGLNTQTETVLFIRKKATVKDVQALWVLAMAAAAAAGYHLLQLLRCFYLSRFADGKPCRHRRAIAWLCFLLDKGCAYITFATTVAAAQACVVALYGTHALQWTKLCNIYTRFCEQVAGSLVCAMLAAVGTALLSVVSARNLFRLYPSMLSPPPSSFVG</sequence>
<organism>
    <name type="scientific">Oryza sativa subsp. japonica</name>
    <name type="common">Rice</name>
    <dbReference type="NCBI Taxonomy" id="39947"/>
    <lineage>
        <taxon>Eukaryota</taxon>
        <taxon>Viridiplantae</taxon>
        <taxon>Streptophyta</taxon>
        <taxon>Embryophyta</taxon>
        <taxon>Tracheophyta</taxon>
        <taxon>Spermatophyta</taxon>
        <taxon>Magnoliopsida</taxon>
        <taxon>Liliopsida</taxon>
        <taxon>Poales</taxon>
        <taxon>Poaceae</taxon>
        <taxon>BOP clade</taxon>
        <taxon>Oryzoideae</taxon>
        <taxon>Oryzeae</taxon>
        <taxon>Oryzinae</taxon>
        <taxon>Oryza</taxon>
        <taxon>Oryza sativa</taxon>
    </lineage>
</organism>
<gene>
    <name type="ordered locus">Os06g0656300</name>
    <name type="ordered locus">LOC_Os06g44610</name>
    <name type="ORF">P0460H04.29</name>
    <name type="ORF">P0709F06.50</name>
</gene>
<keyword id="KW-1003">Cell membrane</keyword>
<keyword id="KW-0472">Membrane</keyword>
<keyword id="KW-1185">Reference proteome</keyword>
<keyword id="KW-0812">Transmembrane</keyword>
<keyword id="KW-1133">Transmembrane helix</keyword>
<comment type="subunit">
    <text evidence="1">Homodimer and heterodimers.</text>
</comment>
<comment type="subcellular location">
    <subcellularLocation>
        <location evidence="1">Cell membrane</location>
        <topology evidence="1">Multi-pass membrane protein</topology>
    </subcellularLocation>
</comment>
<comment type="similarity">
    <text evidence="3">Belongs to the Casparian strip membrane proteins (CASP) family.</text>
</comment>